<dbReference type="EMBL" id="AY007312">
    <property type="protein sequence ID" value="AAG09624.1"/>
    <property type="molecule type" value="mRNA"/>
</dbReference>
<dbReference type="SMR" id="Q9HFP8"/>
<dbReference type="Allergome" id="69">
    <property type="allergen name" value="Asp f 17"/>
</dbReference>
<dbReference type="OMA" id="HSHEMTA"/>
<dbReference type="GO" id="GO:0005576">
    <property type="term" value="C:extracellular region"/>
    <property type="evidence" value="ECO:0007669"/>
    <property type="project" value="UniProtKB-KW"/>
</dbReference>
<dbReference type="GO" id="GO:0009277">
    <property type="term" value="C:fungal-type cell wall"/>
    <property type="evidence" value="ECO:0000314"/>
    <property type="project" value="AspGD"/>
</dbReference>
<dbReference type="GO" id="GO:0008289">
    <property type="term" value="F:lipid binding"/>
    <property type="evidence" value="ECO:0007669"/>
    <property type="project" value="UniProtKB-KW"/>
</dbReference>
<dbReference type="FunFam" id="1.20.1280.140:FF:000001">
    <property type="entry name" value="Cell wall serine-threonine-rich galactomannoprotein Mp1"/>
    <property type="match status" value="1"/>
</dbReference>
<dbReference type="Gene3D" id="1.20.1280.140">
    <property type="match status" value="1"/>
</dbReference>
<dbReference type="InterPro" id="IPR021054">
    <property type="entry name" value="Cell_wall_mannoprotein_1"/>
</dbReference>
<dbReference type="PANTHER" id="PTHR38123">
    <property type="entry name" value="CELL WALL SERINE-THREONINE-RICH GALACTOMANNOPROTEIN MP1 (AFU_ORTHOLOGUE AFUA_4G03240)"/>
    <property type="match status" value="1"/>
</dbReference>
<dbReference type="PANTHER" id="PTHR38123:SF6">
    <property type="entry name" value="CELL WALL SERINE-THREONINE-RICH GALACTOMANNOPROTEIN MP1 (AFU_ORTHOLOGUE AFUA_4G03240)"/>
    <property type="match status" value="1"/>
</dbReference>
<dbReference type="Pfam" id="PF12296">
    <property type="entry name" value="HsbA"/>
    <property type="match status" value="1"/>
</dbReference>
<keyword id="KW-0134">Cell wall</keyword>
<keyword id="KW-0446">Lipid-binding</keyword>
<keyword id="KW-0964">Secreted</keyword>
<keyword id="KW-0732">Signal</keyword>
<organism evidence="8">
    <name type="scientific">Aspergillus fumigatus</name>
    <name type="common">Neosartorya fumigata</name>
    <dbReference type="NCBI Taxonomy" id="746128"/>
    <lineage>
        <taxon>Eukaryota</taxon>
        <taxon>Fungi</taxon>
        <taxon>Dikarya</taxon>
        <taxon>Ascomycota</taxon>
        <taxon>Pezizomycotina</taxon>
        <taxon>Eurotiomycetes</taxon>
        <taxon>Eurotiomycetidae</taxon>
        <taxon>Eurotiales</taxon>
        <taxon>Aspergillaceae</taxon>
        <taxon>Aspergillus</taxon>
        <taxon>Aspergillus subgen. Fumigati</taxon>
    </lineage>
</organism>
<protein>
    <recommendedName>
        <fullName evidence="1">Cell wall mannoprotein 1</fullName>
    </recommendedName>
</protein>
<feature type="signal peptide" evidence="2">
    <location>
        <begin position="1"/>
        <end position="17"/>
    </location>
</feature>
<feature type="chain" id="PRO_0000432783" description="Cell wall mannoprotein 1" evidence="2">
    <location>
        <begin position="18"/>
        <end position="284"/>
    </location>
</feature>
<feature type="region of interest" description="Disordered" evidence="3">
    <location>
        <begin position="176"/>
        <end position="252"/>
    </location>
</feature>
<feature type="compositionally biased region" description="Low complexity" evidence="3">
    <location>
        <begin position="176"/>
        <end position="234"/>
    </location>
</feature>
<comment type="function">
    <text evidence="4">Constitutive protein of the cell wall. Antigen target of host humoral immune response.</text>
</comment>
<comment type="subcellular location">
    <subcellularLocation>
        <location evidence="4">Secreted</location>
        <location evidence="4">Cell wall</location>
    </subcellularLocation>
    <text evidence="4">Associated with the entire thickness of the hyphal cell walls, hyphal septa, and walls of conidiospores.</text>
</comment>
<comment type="PTM">
    <text evidence="4">Galactomannoprotein, glycosylated.</text>
</comment>
<comment type="biotechnology">
    <text evidence="7">May be useful for serodiagnosis in patients with aspergilloma or invasive aspergillosis.</text>
</comment>
<comment type="similarity">
    <text evidence="6">Belongs to the cell wall mannoprotein 1 family.</text>
</comment>
<accession>Q9HFP8</accession>
<accession>Q4W9Z1</accession>
<reference key="1">
    <citation type="journal article" date="2001" name="J. Clin. Microbiol.">
        <title>Characterization of AFMP1: a novel target for serodiagnosis of aspergillosis.</title>
        <authorList>
            <person name="Yuen K.Y."/>
            <person name="Chan C.M."/>
            <person name="Chan K.M."/>
            <person name="Woo P.C."/>
            <person name="Che X.Y."/>
            <person name="Leung A.S."/>
            <person name="Cao L."/>
        </authorList>
    </citation>
    <scope>NUCLEOTIDE SEQUENCE [MRNA]</scope>
    <scope>FUNCTION</scope>
    <scope>SUBCELLULAR LOCATION</scope>
    <scope>GLYCOSYLATION</scope>
    <scope>BIOTECHNOLOGY</scope>
</reference>
<sequence>MRFSALLVTLGLTGALATPTLVSREAPAVGVISDISAQTSALASAVSSYNGGDPSAVKSASEKLVSTINSGVDTVKSGPALSTADALALTSPVQDLTKQVEGVIDDLISKKDKFVAANAGGTVYEDLKAQYTAADSLAKAISAKVPESLSDIAAQLSAGITAAIQKGIDAYKDAASSTGTASSSAPATETATATETSTATGTVTETATSTPVIPTGTASGSASATPSTTATPTTGGSGSGSGSSTGTATASTSTNLLSTGAASKEHFSYSLGGAVVAAAIAVAL</sequence>
<proteinExistence type="evidence at protein level"/>
<evidence type="ECO:0000250" key="1">
    <source>
        <dbReference type="UniProtKB" id="Q8TG42"/>
    </source>
</evidence>
<evidence type="ECO:0000255" key="2"/>
<evidence type="ECO:0000256" key="3">
    <source>
        <dbReference type="SAM" id="MobiDB-lite"/>
    </source>
</evidence>
<evidence type="ECO:0000269" key="4">
    <source>
    </source>
</evidence>
<evidence type="ECO:0000303" key="5">
    <source>
    </source>
</evidence>
<evidence type="ECO:0000305" key="6"/>
<evidence type="ECO:0000305" key="7">
    <source>
    </source>
</evidence>
<evidence type="ECO:0000312" key="8">
    <source>
        <dbReference type="EMBL" id="AAG09624.1"/>
    </source>
</evidence>
<name>MP1_ASPFM</name>
<gene>
    <name evidence="5" type="primary">MP1</name>
</gene>